<organism>
    <name type="scientific">Variovorax paradoxus (strain S110)</name>
    <dbReference type="NCBI Taxonomy" id="543728"/>
    <lineage>
        <taxon>Bacteria</taxon>
        <taxon>Pseudomonadati</taxon>
        <taxon>Pseudomonadota</taxon>
        <taxon>Betaproteobacteria</taxon>
        <taxon>Burkholderiales</taxon>
        <taxon>Comamonadaceae</taxon>
        <taxon>Variovorax</taxon>
    </lineage>
</organism>
<feature type="chain" id="PRO_1000203966" description="Glycerol kinase">
    <location>
        <begin position="1"/>
        <end position="497"/>
    </location>
</feature>
<feature type="binding site" evidence="1">
    <location>
        <position position="11"/>
    </location>
    <ligand>
        <name>ADP</name>
        <dbReference type="ChEBI" id="CHEBI:456216"/>
    </ligand>
</feature>
<feature type="binding site" evidence="1">
    <location>
        <position position="11"/>
    </location>
    <ligand>
        <name>ATP</name>
        <dbReference type="ChEBI" id="CHEBI:30616"/>
    </ligand>
</feature>
<feature type="binding site" evidence="1">
    <location>
        <position position="11"/>
    </location>
    <ligand>
        <name>sn-glycerol 3-phosphate</name>
        <dbReference type="ChEBI" id="CHEBI:57597"/>
    </ligand>
</feature>
<feature type="binding site" evidence="1">
    <location>
        <position position="12"/>
    </location>
    <ligand>
        <name>ATP</name>
        <dbReference type="ChEBI" id="CHEBI:30616"/>
    </ligand>
</feature>
<feature type="binding site" evidence="1">
    <location>
        <position position="13"/>
    </location>
    <ligand>
        <name>ATP</name>
        <dbReference type="ChEBI" id="CHEBI:30616"/>
    </ligand>
</feature>
<feature type="binding site" evidence="1">
    <location>
        <position position="15"/>
    </location>
    <ligand>
        <name>ADP</name>
        <dbReference type="ChEBI" id="CHEBI:456216"/>
    </ligand>
</feature>
<feature type="binding site" evidence="1">
    <location>
        <position position="81"/>
    </location>
    <ligand>
        <name>glycerol</name>
        <dbReference type="ChEBI" id="CHEBI:17754"/>
    </ligand>
</feature>
<feature type="binding site" evidence="1">
    <location>
        <position position="81"/>
    </location>
    <ligand>
        <name>sn-glycerol 3-phosphate</name>
        <dbReference type="ChEBI" id="CHEBI:57597"/>
    </ligand>
</feature>
<feature type="binding site" evidence="1">
    <location>
        <position position="82"/>
    </location>
    <ligand>
        <name>glycerol</name>
        <dbReference type="ChEBI" id="CHEBI:17754"/>
    </ligand>
</feature>
<feature type="binding site" evidence="1">
    <location>
        <position position="82"/>
    </location>
    <ligand>
        <name>sn-glycerol 3-phosphate</name>
        <dbReference type="ChEBI" id="CHEBI:57597"/>
    </ligand>
</feature>
<feature type="binding site" evidence="1">
    <location>
        <position position="133"/>
    </location>
    <ligand>
        <name>glycerol</name>
        <dbReference type="ChEBI" id="CHEBI:17754"/>
    </ligand>
</feature>
<feature type="binding site" evidence="1">
    <location>
        <position position="133"/>
    </location>
    <ligand>
        <name>sn-glycerol 3-phosphate</name>
        <dbReference type="ChEBI" id="CHEBI:57597"/>
    </ligand>
</feature>
<feature type="binding site" evidence="1">
    <location>
        <position position="242"/>
    </location>
    <ligand>
        <name>glycerol</name>
        <dbReference type="ChEBI" id="CHEBI:17754"/>
    </ligand>
</feature>
<feature type="binding site" evidence="1">
    <location>
        <position position="242"/>
    </location>
    <ligand>
        <name>sn-glycerol 3-phosphate</name>
        <dbReference type="ChEBI" id="CHEBI:57597"/>
    </ligand>
</feature>
<feature type="binding site" evidence="1">
    <location>
        <position position="243"/>
    </location>
    <ligand>
        <name>glycerol</name>
        <dbReference type="ChEBI" id="CHEBI:17754"/>
    </ligand>
</feature>
<feature type="binding site" evidence="1">
    <location>
        <position position="264"/>
    </location>
    <ligand>
        <name>ADP</name>
        <dbReference type="ChEBI" id="CHEBI:456216"/>
    </ligand>
</feature>
<feature type="binding site" evidence="1">
    <location>
        <position position="264"/>
    </location>
    <ligand>
        <name>ATP</name>
        <dbReference type="ChEBI" id="CHEBI:30616"/>
    </ligand>
</feature>
<feature type="binding site" evidence="1">
    <location>
        <position position="307"/>
    </location>
    <ligand>
        <name>ADP</name>
        <dbReference type="ChEBI" id="CHEBI:456216"/>
    </ligand>
</feature>
<feature type="binding site" evidence="1">
    <location>
        <position position="307"/>
    </location>
    <ligand>
        <name>ATP</name>
        <dbReference type="ChEBI" id="CHEBI:30616"/>
    </ligand>
</feature>
<feature type="binding site" evidence="1">
    <location>
        <position position="311"/>
    </location>
    <ligand>
        <name>ATP</name>
        <dbReference type="ChEBI" id="CHEBI:30616"/>
    </ligand>
</feature>
<feature type="binding site" evidence="1">
    <location>
        <position position="412"/>
    </location>
    <ligand>
        <name>ADP</name>
        <dbReference type="ChEBI" id="CHEBI:456216"/>
    </ligand>
</feature>
<feature type="binding site" evidence="1">
    <location>
        <position position="412"/>
    </location>
    <ligand>
        <name>ATP</name>
        <dbReference type="ChEBI" id="CHEBI:30616"/>
    </ligand>
</feature>
<feature type="binding site" evidence="1">
    <location>
        <position position="416"/>
    </location>
    <ligand>
        <name>ADP</name>
        <dbReference type="ChEBI" id="CHEBI:456216"/>
    </ligand>
</feature>
<evidence type="ECO:0000255" key="1">
    <source>
        <dbReference type="HAMAP-Rule" id="MF_00186"/>
    </source>
</evidence>
<protein>
    <recommendedName>
        <fullName evidence="1">Glycerol kinase</fullName>
        <ecNumber evidence="1">2.7.1.30</ecNumber>
    </recommendedName>
    <alternativeName>
        <fullName evidence="1">ATP:glycerol 3-phosphotransferase</fullName>
    </alternativeName>
    <alternativeName>
        <fullName evidence="1">Glycerokinase</fullName>
        <shortName evidence="1">GK</shortName>
    </alternativeName>
</protein>
<comment type="function">
    <text evidence="1">Key enzyme in the regulation of glycerol uptake and metabolism. Catalyzes the phosphorylation of glycerol to yield sn-glycerol 3-phosphate.</text>
</comment>
<comment type="catalytic activity">
    <reaction evidence="1">
        <text>glycerol + ATP = sn-glycerol 3-phosphate + ADP + H(+)</text>
        <dbReference type="Rhea" id="RHEA:21644"/>
        <dbReference type="ChEBI" id="CHEBI:15378"/>
        <dbReference type="ChEBI" id="CHEBI:17754"/>
        <dbReference type="ChEBI" id="CHEBI:30616"/>
        <dbReference type="ChEBI" id="CHEBI:57597"/>
        <dbReference type="ChEBI" id="CHEBI:456216"/>
        <dbReference type="EC" id="2.7.1.30"/>
    </reaction>
</comment>
<comment type="activity regulation">
    <text evidence="1">Inhibited by fructose 1,6-bisphosphate (FBP).</text>
</comment>
<comment type="pathway">
    <text evidence="1">Polyol metabolism; glycerol degradation via glycerol kinase pathway; sn-glycerol 3-phosphate from glycerol: step 1/1.</text>
</comment>
<comment type="similarity">
    <text evidence="1">Belongs to the FGGY kinase family.</text>
</comment>
<dbReference type="EC" id="2.7.1.30" evidence="1"/>
<dbReference type="EMBL" id="CP001635">
    <property type="protein sequence ID" value="ACS20016.1"/>
    <property type="molecule type" value="Genomic_DNA"/>
</dbReference>
<dbReference type="SMR" id="C5CSQ9"/>
<dbReference type="STRING" id="543728.Vapar_3399"/>
<dbReference type="KEGG" id="vap:Vapar_3399"/>
<dbReference type="eggNOG" id="COG0554">
    <property type="taxonomic scope" value="Bacteria"/>
</dbReference>
<dbReference type="HOGENOM" id="CLU_009281_2_3_4"/>
<dbReference type="OrthoDB" id="9805576at2"/>
<dbReference type="UniPathway" id="UPA00618">
    <property type="reaction ID" value="UER00672"/>
</dbReference>
<dbReference type="GO" id="GO:0005829">
    <property type="term" value="C:cytosol"/>
    <property type="evidence" value="ECO:0007669"/>
    <property type="project" value="TreeGrafter"/>
</dbReference>
<dbReference type="GO" id="GO:0005524">
    <property type="term" value="F:ATP binding"/>
    <property type="evidence" value="ECO:0007669"/>
    <property type="project" value="UniProtKB-UniRule"/>
</dbReference>
<dbReference type="GO" id="GO:0004370">
    <property type="term" value="F:glycerol kinase activity"/>
    <property type="evidence" value="ECO:0000250"/>
    <property type="project" value="UniProtKB"/>
</dbReference>
<dbReference type="GO" id="GO:0019563">
    <property type="term" value="P:glycerol catabolic process"/>
    <property type="evidence" value="ECO:0007669"/>
    <property type="project" value="UniProtKB-UniRule"/>
</dbReference>
<dbReference type="GO" id="GO:0006071">
    <property type="term" value="P:glycerol metabolic process"/>
    <property type="evidence" value="ECO:0000250"/>
    <property type="project" value="UniProtKB"/>
</dbReference>
<dbReference type="GO" id="GO:0006072">
    <property type="term" value="P:glycerol-3-phosphate metabolic process"/>
    <property type="evidence" value="ECO:0007669"/>
    <property type="project" value="InterPro"/>
</dbReference>
<dbReference type="CDD" id="cd07786">
    <property type="entry name" value="FGGY_EcGK_like"/>
    <property type="match status" value="1"/>
</dbReference>
<dbReference type="FunFam" id="3.30.420.40:FF:000007">
    <property type="entry name" value="Glycerol kinase"/>
    <property type="match status" value="1"/>
</dbReference>
<dbReference type="FunFam" id="3.30.420.40:FF:000008">
    <property type="entry name" value="Glycerol kinase"/>
    <property type="match status" value="1"/>
</dbReference>
<dbReference type="Gene3D" id="3.30.420.40">
    <property type="match status" value="2"/>
</dbReference>
<dbReference type="HAMAP" id="MF_00186">
    <property type="entry name" value="Glycerol_kin"/>
    <property type="match status" value="1"/>
</dbReference>
<dbReference type="InterPro" id="IPR043129">
    <property type="entry name" value="ATPase_NBD"/>
</dbReference>
<dbReference type="InterPro" id="IPR000577">
    <property type="entry name" value="Carb_kinase_FGGY"/>
</dbReference>
<dbReference type="InterPro" id="IPR018483">
    <property type="entry name" value="Carb_kinase_FGGY_CS"/>
</dbReference>
<dbReference type="InterPro" id="IPR018485">
    <property type="entry name" value="FGGY_C"/>
</dbReference>
<dbReference type="InterPro" id="IPR018484">
    <property type="entry name" value="FGGY_N"/>
</dbReference>
<dbReference type="InterPro" id="IPR005999">
    <property type="entry name" value="Glycerol_kin"/>
</dbReference>
<dbReference type="NCBIfam" id="TIGR01311">
    <property type="entry name" value="glycerol_kin"/>
    <property type="match status" value="1"/>
</dbReference>
<dbReference type="NCBIfam" id="NF000756">
    <property type="entry name" value="PRK00047.1"/>
    <property type="match status" value="1"/>
</dbReference>
<dbReference type="PANTHER" id="PTHR10196:SF69">
    <property type="entry name" value="GLYCEROL KINASE"/>
    <property type="match status" value="1"/>
</dbReference>
<dbReference type="PANTHER" id="PTHR10196">
    <property type="entry name" value="SUGAR KINASE"/>
    <property type="match status" value="1"/>
</dbReference>
<dbReference type="Pfam" id="PF02782">
    <property type="entry name" value="FGGY_C"/>
    <property type="match status" value="1"/>
</dbReference>
<dbReference type="Pfam" id="PF00370">
    <property type="entry name" value="FGGY_N"/>
    <property type="match status" value="1"/>
</dbReference>
<dbReference type="PIRSF" id="PIRSF000538">
    <property type="entry name" value="GlpK"/>
    <property type="match status" value="1"/>
</dbReference>
<dbReference type="SUPFAM" id="SSF53067">
    <property type="entry name" value="Actin-like ATPase domain"/>
    <property type="match status" value="2"/>
</dbReference>
<dbReference type="PROSITE" id="PS00933">
    <property type="entry name" value="FGGY_KINASES_1"/>
    <property type="match status" value="1"/>
</dbReference>
<dbReference type="PROSITE" id="PS00445">
    <property type="entry name" value="FGGY_KINASES_2"/>
    <property type="match status" value="1"/>
</dbReference>
<name>GLPK_VARPS</name>
<accession>C5CSQ9</accession>
<sequence>MTYLLALDQGTSSSRSIVFDREGRIVAIAQKELTQIYPRPGWVEHDPMEIWHSQLATARDVLAKAKLQPADIHAIGITNQRETTLLWNRKTGQPVHHAIVWQDRRAEPMCAQLRDQGMAATIQEKTGLVIDAYFSGTKLRWLLDNVPGARAQAERGELAFGTVDSWLMWQLTGGKVHVTDVSNASRTMLFNVHRNEWDADLLKALDIPAALMPSVQPSSSHFADTDAALLGRALPIGGVAGDQQSALFGQACFAAGMAKNTYGTGCFLLMHTGGECQPSHNGLLVTSAAQTSATPQYAMEGSVFVGGAVVQWLRDGLKAIKGSAEVQSLAESVPDAGGVMMVPAFTGLGAPYWDADARGTITGLTRGTTVAHIARAALESIAYQSAALLQAMSRDAVAAGGTPVAELRVDGGASVNDLLMQFQADLLGIPVVRPEVIETTALGAAYLAGLSTGVYSDARQLSKLWKVERRFMPTMGRAQAEESMARWERAVRQATAT</sequence>
<gene>
    <name evidence="1" type="primary">glpK</name>
    <name type="ordered locus">Vapar_3399</name>
</gene>
<keyword id="KW-0067">ATP-binding</keyword>
<keyword id="KW-0319">Glycerol metabolism</keyword>
<keyword id="KW-0418">Kinase</keyword>
<keyword id="KW-0547">Nucleotide-binding</keyword>
<keyword id="KW-0808">Transferase</keyword>
<proteinExistence type="inferred from homology"/>
<reference key="1">
    <citation type="journal article" date="2011" name="J. Bacteriol.">
        <title>Complete genome sequence of the metabolically versatile plant growth-promoting endophyte, Variovorax paradoxus S110.</title>
        <authorList>
            <person name="Han J.I."/>
            <person name="Choi H.K."/>
            <person name="Lee S.W."/>
            <person name="Orwin P.M."/>
            <person name="Kim J."/>
            <person name="Laroe S.L."/>
            <person name="Kim T.G."/>
            <person name="O'Neil J."/>
            <person name="Leadbetter J.R."/>
            <person name="Lee S.Y."/>
            <person name="Hur C.G."/>
            <person name="Spain J.C."/>
            <person name="Ovchinnikova G."/>
            <person name="Goodwin L."/>
            <person name="Han C."/>
        </authorList>
    </citation>
    <scope>NUCLEOTIDE SEQUENCE [LARGE SCALE GENOMIC DNA]</scope>
    <source>
        <strain>S110</strain>
    </source>
</reference>